<name>CSDE_ECOLI</name>
<comment type="function">
    <text evidence="1 2 3">Stimulates the cysteine desulfurase activity of CsdA. Contains a cysteine residue (Cys-61) that acts to accept sulfur liberated via the desulfurase activity of CsdA. May be able to transfer sulfur to TcdA/CsdL. Seems to support the function of TcdA in the generation of cyclic threonylcarbamoyladenosine at position 37 (ct(6)A37) in tRNAs that read codons beginning with adenine. Does not appear to participate in Fe/S biogenesis.</text>
</comment>
<comment type="subunit">
    <text evidence="1 2">Homodimer. Forms a heterodimer with CsdA. Interacts with CsdA and with TcdA/CsdL.</text>
</comment>
<comment type="interaction">
    <interactant intactId="EBI-1130454">
        <id>P0AGF2</id>
    </interactant>
    <interactant intactId="EBI-545660">
        <id>Q46925</id>
        <label>csdA</label>
    </interactant>
    <organismsDiffer>false</organismsDiffer>
    <experiments>8</experiments>
</comment>
<comment type="interaction">
    <interactant intactId="EBI-1130454">
        <id>P0AGF2</id>
    </interactant>
    <interactant intactId="EBI-1130463">
        <id>Q46927</id>
        <label>tcdA</label>
    </interactant>
    <organismsDiffer>false</organismsDiffer>
    <experiments>3</experiments>
</comment>
<comment type="disruption phenotype">
    <text evidence="2 3">Cells lacking this gene display a high decrease in the level of ct(6)A modification in tRNAs, and show the t(6)A modification instead. They also show no defects in motility, fitness or antibiotic sensitivity, in contrast to csdA mutants.</text>
</comment>
<comment type="similarity">
    <text evidence="4">Belongs to the SufE family.</text>
</comment>
<reference key="1">
    <citation type="journal article" date="1997" name="Science">
        <title>The complete genome sequence of Escherichia coli K-12.</title>
        <authorList>
            <person name="Blattner F.R."/>
            <person name="Plunkett G. III"/>
            <person name="Bloch C.A."/>
            <person name="Perna N.T."/>
            <person name="Burland V."/>
            <person name="Riley M."/>
            <person name="Collado-Vides J."/>
            <person name="Glasner J.D."/>
            <person name="Rode C.K."/>
            <person name="Mayhew G.F."/>
            <person name="Gregor J."/>
            <person name="Davis N.W."/>
            <person name="Kirkpatrick H.A."/>
            <person name="Goeden M.A."/>
            <person name="Rose D.J."/>
            <person name="Mau B."/>
            <person name="Shao Y."/>
        </authorList>
    </citation>
    <scope>NUCLEOTIDE SEQUENCE [LARGE SCALE GENOMIC DNA]</scope>
    <source>
        <strain>K12 / MG1655 / ATCC 47076</strain>
    </source>
</reference>
<reference key="2">
    <citation type="journal article" date="2006" name="Mol. Syst. Biol.">
        <title>Highly accurate genome sequences of Escherichia coli K-12 strains MG1655 and W3110.</title>
        <authorList>
            <person name="Hayashi K."/>
            <person name="Morooka N."/>
            <person name="Yamamoto Y."/>
            <person name="Fujita K."/>
            <person name="Isono K."/>
            <person name="Choi S."/>
            <person name="Ohtsubo E."/>
            <person name="Baba T."/>
            <person name="Wanner B.L."/>
            <person name="Mori H."/>
            <person name="Horiuchi T."/>
        </authorList>
    </citation>
    <scope>NUCLEOTIDE SEQUENCE [LARGE SCALE GENOMIC DNA]</scope>
    <source>
        <strain>K12 / W3110 / ATCC 27325 / DSM 5911</strain>
    </source>
</reference>
<reference key="3">
    <citation type="journal article" date="2005" name="J. Biol. Chem.">
        <title>Analysis of the heteromeric CsdA-CsdE cysteine desulfurase, assisting Fe-S cluster biogenesis in Escherichia coli.</title>
        <authorList>
            <person name="Loiseau L."/>
            <person name="Ollagnier-de Choudens S."/>
            <person name="Lascoux D."/>
            <person name="Forest E."/>
            <person name="Fontecave M."/>
            <person name="Barras F."/>
        </authorList>
    </citation>
    <scope>FUNCTION</scope>
    <scope>GENE NAME</scope>
    <scope>INTERACTION WITH CSDA</scope>
    <scope>SUBUNIT</scope>
    <scope>SULFHYDRATION AT CYS-61</scope>
    <scope>MUTAGENESIS OF CYS-61</scope>
    <source>
        <strain>K12 / MG1655 / ATCC 47076</strain>
    </source>
</reference>
<reference key="4">
    <citation type="journal article" date="2009" name="Mol. Microbiol.">
        <title>The CsdA cysteine desulphurase promotes Fe/S biogenesis by recruiting Suf components and participates in a new sulphur transfer pathway by recruiting CsdL (ex-YgdL), a ubiquitin-modifying-like protein.</title>
        <authorList>
            <person name="Trotter V."/>
            <person name="Vinella D."/>
            <person name="Loiseau L."/>
            <person name="Ollagnier de Choudens S."/>
            <person name="Fontecave M."/>
            <person name="Barras F."/>
        </authorList>
    </citation>
    <scope>FUNCTION</scope>
    <scope>INTERACTION WITH CSDA AND TCDA</scope>
    <scope>DISRUPTION PHENOTYPE</scope>
    <source>
        <strain>K12 / MG1655 / ATCC 47076</strain>
    </source>
</reference>
<reference key="5">
    <citation type="journal article" date="2013" name="Nat. Chem. Biol.">
        <title>A cyclic form of N6-threonylcarbamoyladenosine as a widely distributed tRNA hypermodification.</title>
        <authorList>
            <person name="Miyauchi K."/>
            <person name="Kimura S."/>
            <person name="Suzuki T."/>
        </authorList>
    </citation>
    <scope>FUNCTION</scope>
    <scope>ROLE IN CT(6)A37 FORMATION</scope>
    <scope>DISRUPTION PHENOTYPE</scope>
</reference>
<reference key="6">
    <citation type="journal article" date="2005" name="Protein Sci.">
        <title>High-quality homology models derived from NMR and X-ray structures of E. coli proteins YgdK and SufE suggest that all members of the YgdK/SufE protein family are enhancers of cysteine desulfurases.</title>
        <authorList>
            <person name="Liu G."/>
            <person name="Li Z."/>
            <person name="Chiang Y."/>
            <person name="Acton T."/>
            <person name="Montelione G.T."/>
            <person name="Murray D."/>
            <person name="Szyperski T."/>
        </authorList>
    </citation>
    <scope>STRUCTURE BY NMR</scope>
</reference>
<dbReference type="EMBL" id="U29581">
    <property type="protein sequence ID" value="AAB40461.1"/>
    <property type="molecule type" value="Genomic_DNA"/>
</dbReference>
<dbReference type="EMBL" id="U00096">
    <property type="protein sequence ID" value="AAC75853.1"/>
    <property type="molecule type" value="Genomic_DNA"/>
</dbReference>
<dbReference type="EMBL" id="AP009048">
    <property type="protein sequence ID" value="BAE76883.1"/>
    <property type="molecule type" value="Genomic_DNA"/>
</dbReference>
<dbReference type="PIR" id="G65063">
    <property type="entry name" value="G65063"/>
</dbReference>
<dbReference type="RefSeq" id="NP_417291.1">
    <property type="nucleotide sequence ID" value="NC_000913.3"/>
</dbReference>
<dbReference type="RefSeq" id="WP_000184261.1">
    <property type="nucleotide sequence ID" value="NZ_SSUV01000026.1"/>
</dbReference>
<dbReference type="PDB" id="1NI7">
    <property type="method" value="NMR"/>
    <property type="chains" value="A=1-147"/>
</dbReference>
<dbReference type="PDB" id="4LW4">
    <property type="method" value="X-ray"/>
    <property type="resolution" value="2.01 A"/>
    <property type="chains" value="C/D=1-147"/>
</dbReference>
<dbReference type="PDB" id="5EEP">
    <property type="method" value="X-ray"/>
    <property type="resolution" value="2.40 A"/>
    <property type="chains" value="A=1-147"/>
</dbReference>
<dbReference type="PDB" id="5FT8">
    <property type="method" value="X-ray"/>
    <property type="resolution" value="2.50 A"/>
    <property type="chains" value="B/D/F/H/J/L/N/P=1-147"/>
</dbReference>
<dbReference type="PDB" id="5NQ6">
    <property type="method" value="X-ray"/>
    <property type="resolution" value="2.40 A"/>
    <property type="chains" value="A/B=1-147"/>
</dbReference>
<dbReference type="PDBsum" id="1NI7"/>
<dbReference type="PDBsum" id="4LW4"/>
<dbReference type="PDBsum" id="5EEP"/>
<dbReference type="PDBsum" id="5FT8"/>
<dbReference type="PDBsum" id="5NQ6"/>
<dbReference type="BMRB" id="P0AGF2"/>
<dbReference type="SMR" id="P0AGF2"/>
<dbReference type="BioGRID" id="4261123">
    <property type="interactions" value="399"/>
</dbReference>
<dbReference type="BioGRID" id="851604">
    <property type="interactions" value="1"/>
</dbReference>
<dbReference type="ComplexPortal" id="CPX-2138">
    <property type="entry name" value="cdsA-cdsE complex"/>
</dbReference>
<dbReference type="DIP" id="DIP-12143N"/>
<dbReference type="FunCoup" id="P0AGF2">
    <property type="interactions" value="77"/>
</dbReference>
<dbReference type="IntAct" id="P0AGF2">
    <property type="interactions" value="5"/>
</dbReference>
<dbReference type="STRING" id="511145.b2811"/>
<dbReference type="jPOST" id="P0AGF2"/>
<dbReference type="PaxDb" id="511145-b2811"/>
<dbReference type="EnsemblBacteria" id="AAC75853">
    <property type="protein sequence ID" value="AAC75853"/>
    <property type="gene ID" value="b2811"/>
</dbReference>
<dbReference type="GeneID" id="75172895"/>
<dbReference type="GeneID" id="947274"/>
<dbReference type="KEGG" id="ecj:JW2782"/>
<dbReference type="KEGG" id="eco:b2811"/>
<dbReference type="KEGG" id="ecoc:C3026_15450"/>
<dbReference type="PATRIC" id="fig|1411691.4.peg.3922"/>
<dbReference type="EchoBASE" id="EB2892"/>
<dbReference type="eggNOG" id="COG2166">
    <property type="taxonomic scope" value="Bacteria"/>
</dbReference>
<dbReference type="HOGENOM" id="CLU_124502_1_0_6"/>
<dbReference type="InParanoid" id="P0AGF2"/>
<dbReference type="OMA" id="DWMQRYE"/>
<dbReference type="OrthoDB" id="9799320at2"/>
<dbReference type="PhylomeDB" id="P0AGF2"/>
<dbReference type="BioCyc" id="EcoCyc:G7455-MONOMER"/>
<dbReference type="BioCyc" id="MetaCyc:G7455-MONOMER"/>
<dbReference type="EvolutionaryTrace" id="P0AGF2"/>
<dbReference type="PRO" id="PR:P0AGF2"/>
<dbReference type="Proteomes" id="UP000000625">
    <property type="component" value="Chromosome"/>
</dbReference>
<dbReference type="GO" id="GO:0097163">
    <property type="term" value="F:sulfur carrier activity"/>
    <property type="evidence" value="ECO:0000315"/>
    <property type="project" value="EcoCyc"/>
</dbReference>
<dbReference type="GO" id="GO:0061504">
    <property type="term" value="P:cyclic threonylcarbamoyladenosine biosynthetic process"/>
    <property type="evidence" value="ECO:0000315"/>
    <property type="project" value="EcoCyc"/>
</dbReference>
<dbReference type="FunFam" id="3.90.1010.10:FF:000007">
    <property type="entry name" value="Cysteine desulfurase, sulfur acceptor subunit CsdE"/>
    <property type="match status" value="1"/>
</dbReference>
<dbReference type="Gene3D" id="3.90.1010.10">
    <property type="match status" value="1"/>
</dbReference>
<dbReference type="InterPro" id="IPR017763">
    <property type="entry name" value="Cysteine_desulfurase_CsdE"/>
</dbReference>
<dbReference type="InterPro" id="IPR003808">
    <property type="entry name" value="Fe-S_metab-assoc_dom"/>
</dbReference>
<dbReference type="NCBIfam" id="TIGR03391">
    <property type="entry name" value="FeS_syn_CsdE"/>
    <property type="match status" value="1"/>
</dbReference>
<dbReference type="NCBIfam" id="NF011594">
    <property type="entry name" value="PRK15019.1"/>
    <property type="match status" value="1"/>
</dbReference>
<dbReference type="PANTHER" id="PTHR43597:SF5">
    <property type="entry name" value="SUFE-LIKE PROTEIN 2, CHLOROPLASTIC"/>
    <property type="match status" value="1"/>
</dbReference>
<dbReference type="PANTHER" id="PTHR43597">
    <property type="entry name" value="SULFUR ACCEPTOR PROTEIN CSDE"/>
    <property type="match status" value="1"/>
</dbReference>
<dbReference type="Pfam" id="PF02657">
    <property type="entry name" value="SufE"/>
    <property type="match status" value="1"/>
</dbReference>
<dbReference type="SUPFAM" id="SSF82649">
    <property type="entry name" value="SufE/NifU"/>
    <property type="match status" value="1"/>
</dbReference>
<proteinExistence type="evidence at protein level"/>
<accession>P0AGF2</accession>
<accession>Q2MA23</accession>
<accession>Q46926</accession>
<gene>
    <name type="primary">csdE</name>
    <name type="synonym">ygdK</name>
    <name type="ordered locus">b2811</name>
    <name type="ordered locus">JW2782</name>
</gene>
<feature type="chain" id="PRO_0000202136" description="Sulfur acceptor protein CsdE">
    <location>
        <begin position="1"/>
        <end position="147"/>
    </location>
</feature>
<feature type="active site" description="Cysteine persulfide intermediate">
    <location>
        <position position="61"/>
    </location>
</feature>
<feature type="modified residue" description="Cysteine persulfide" evidence="1">
    <location>
        <position position="61"/>
    </location>
</feature>
<feature type="mutagenesis site" description="Unable to exert a stimulatory effect on the cysteine desulfurase activity of CsdA and to accept sulfur. Retains the ability to interact with CsdA." evidence="1">
    <original>C</original>
    <variation>S</variation>
    <location>
        <position position="61"/>
    </location>
</feature>
<feature type="turn" evidence="6">
    <location>
        <begin position="12"/>
        <end position="14"/>
    </location>
</feature>
<feature type="helix" evidence="6">
    <location>
        <begin position="17"/>
        <end position="24"/>
    </location>
</feature>
<feature type="helix" evidence="6">
    <location>
        <begin position="30"/>
        <end position="41"/>
    </location>
</feature>
<feature type="helix" evidence="6">
    <location>
        <begin position="49"/>
        <end position="52"/>
    </location>
</feature>
<feature type="strand" evidence="6">
    <location>
        <begin position="55"/>
        <end position="57"/>
    </location>
</feature>
<feature type="strand" evidence="5">
    <location>
        <begin position="60"/>
        <end position="63"/>
    </location>
</feature>
<feature type="strand" evidence="6">
    <location>
        <begin position="65"/>
        <end position="71"/>
    </location>
</feature>
<feature type="strand" evidence="5">
    <location>
        <begin position="73"/>
        <end position="75"/>
    </location>
</feature>
<feature type="strand" evidence="6">
    <location>
        <begin position="77"/>
        <end position="85"/>
    </location>
</feature>
<feature type="helix" evidence="6">
    <location>
        <begin position="86"/>
        <end position="99"/>
    </location>
</feature>
<feature type="helix" evidence="6">
    <location>
        <begin position="104"/>
        <end position="109"/>
    </location>
</feature>
<feature type="helix" evidence="6">
    <location>
        <begin position="114"/>
        <end position="119"/>
    </location>
</feature>
<feature type="turn" evidence="7">
    <location>
        <begin position="122"/>
        <end position="124"/>
    </location>
</feature>
<feature type="helix" evidence="6">
    <location>
        <begin position="127"/>
        <end position="145"/>
    </location>
</feature>
<protein>
    <recommendedName>
        <fullName>Sulfur acceptor protein CsdE</fullName>
    </recommendedName>
</protein>
<keyword id="KW-0002">3D-structure</keyword>
<keyword id="KW-1185">Reference proteome</keyword>
<organism>
    <name type="scientific">Escherichia coli (strain K12)</name>
    <dbReference type="NCBI Taxonomy" id="83333"/>
    <lineage>
        <taxon>Bacteria</taxon>
        <taxon>Pseudomonadati</taxon>
        <taxon>Pseudomonadota</taxon>
        <taxon>Gammaproteobacteria</taxon>
        <taxon>Enterobacterales</taxon>
        <taxon>Enterobacteriaceae</taxon>
        <taxon>Escherichia</taxon>
    </lineage>
</organism>
<sequence length="147" mass="15940">MTNPQFAGHPFGTTVTAETLRNTFAPLTQWEDKYRQLIMLGKQLPALPDELKAQAKEIAGCENRVWLGYTVAENGKMHFFGDSEGRIVRGLLAVLLTAVEGKTAAELQAQSPLALFDELGLRAQLSASRSQGLNALSEAIIAATKQV</sequence>
<evidence type="ECO:0000269" key="1">
    <source>
    </source>
</evidence>
<evidence type="ECO:0000269" key="2">
    <source>
    </source>
</evidence>
<evidence type="ECO:0000269" key="3">
    <source>
    </source>
</evidence>
<evidence type="ECO:0000305" key="4"/>
<evidence type="ECO:0007829" key="5">
    <source>
        <dbReference type="PDB" id="1NI7"/>
    </source>
</evidence>
<evidence type="ECO:0007829" key="6">
    <source>
        <dbReference type="PDB" id="5EEP"/>
    </source>
</evidence>
<evidence type="ECO:0007829" key="7">
    <source>
        <dbReference type="PDB" id="5NQ6"/>
    </source>
</evidence>